<feature type="chain" id="PRO_0000150195" description="Phosphoserine aminotransferase">
    <location>
        <begin position="1"/>
        <end position="362"/>
    </location>
</feature>
<feature type="binding site" evidence="1">
    <location>
        <position position="9"/>
    </location>
    <ligand>
        <name>L-glutamate</name>
        <dbReference type="ChEBI" id="CHEBI:29985"/>
    </ligand>
</feature>
<feature type="binding site" evidence="1">
    <location>
        <position position="42"/>
    </location>
    <ligand>
        <name>L-glutamate</name>
        <dbReference type="ChEBI" id="CHEBI:29985"/>
    </ligand>
</feature>
<feature type="binding site" evidence="1">
    <location>
        <begin position="76"/>
        <end position="77"/>
    </location>
    <ligand>
        <name>pyridoxal 5'-phosphate</name>
        <dbReference type="ChEBI" id="CHEBI:597326"/>
    </ligand>
</feature>
<feature type="binding site" evidence="1">
    <location>
        <position position="102"/>
    </location>
    <ligand>
        <name>pyridoxal 5'-phosphate</name>
        <dbReference type="ChEBI" id="CHEBI:597326"/>
    </ligand>
</feature>
<feature type="binding site" evidence="1">
    <location>
        <position position="153"/>
    </location>
    <ligand>
        <name>pyridoxal 5'-phosphate</name>
        <dbReference type="ChEBI" id="CHEBI:597326"/>
    </ligand>
</feature>
<feature type="binding site" evidence="1">
    <location>
        <position position="174"/>
    </location>
    <ligand>
        <name>pyridoxal 5'-phosphate</name>
        <dbReference type="ChEBI" id="CHEBI:597326"/>
    </ligand>
</feature>
<feature type="binding site" evidence="1">
    <location>
        <position position="197"/>
    </location>
    <ligand>
        <name>pyridoxal 5'-phosphate</name>
        <dbReference type="ChEBI" id="CHEBI:597326"/>
    </ligand>
</feature>
<feature type="binding site" evidence="1">
    <location>
        <begin position="239"/>
        <end position="240"/>
    </location>
    <ligand>
        <name>pyridoxal 5'-phosphate</name>
        <dbReference type="ChEBI" id="CHEBI:597326"/>
    </ligand>
</feature>
<feature type="modified residue" description="N6-(pyridoxal phosphate)lysine" evidence="1">
    <location>
        <position position="198"/>
    </location>
</feature>
<evidence type="ECO:0000255" key="1">
    <source>
        <dbReference type="HAMAP-Rule" id="MF_00160"/>
    </source>
</evidence>
<dbReference type="EC" id="2.6.1.52" evidence="1"/>
<dbReference type="EMBL" id="BX571864">
    <property type="protein sequence ID" value="CAE13912.1"/>
    <property type="molecule type" value="Genomic_DNA"/>
</dbReference>
<dbReference type="RefSeq" id="WP_011145911.1">
    <property type="nucleotide sequence ID" value="NC_005126.1"/>
</dbReference>
<dbReference type="SMR" id="Q7N6D6"/>
<dbReference type="STRING" id="243265.plu1619"/>
<dbReference type="GeneID" id="48847907"/>
<dbReference type="KEGG" id="plu:plu1619"/>
<dbReference type="eggNOG" id="COG1932">
    <property type="taxonomic scope" value="Bacteria"/>
</dbReference>
<dbReference type="HOGENOM" id="CLU_034866_0_2_6"/>
<dbReference type="OrthoDB" id="9809412at2"/>
<dbReference type="UniPathway" id="UPA00135">
    <property type="reaction ID" value="UER00197"/>
</dbReference>
<dbReference type="UniPathway" id="UPA00244">
    <property type="reaction ID" value="UER00311"/>
</dbReference>
<dbReference type="Proteomes" id="UP000002514">
    <property type="component" value="Chromosome"/>
</dbReference>
<dbReference type="GO" id="GO:0005737">
    <property type="term" value="C:cytoplasm"/>
    <property type="evidence" value="ECO:0007669"/>
    <property type="project" value="UniProtKB-SubCell"/>
</dbReference>
<dbReference type="GO" id="GO:0004648">
    <property type="term" value="F:O-phospho-L-serine:2-oxoglutarate aminotransferase activity"/>
    <property type="evidence" value="ECO:0007669"/>
    <property type="project" value="UniProtKB-UniRule"/>
</dbReference>
<dbReference type="GO" id="GO:0030170">
    <property type="term" value="F:pyridoxal phosphate binding"/>
    <property type="evidence" value="ECO:0007669"/>
    <property type="project" value="UniProtKB-UniRule"/>
</dbReference>
<dbReference type="GO" id="GO:0006564">
    <property type="term" value="P:L-serine biosynthetic process"/>
    <property type="evidence" value="ECO:0007669"/>
    <property type="project" value="UniProtKB-UniRule"/>
</dbReference>
<dbReference type="GO" id="GO:0008615">
    <property type="term" value="P:pyridoxine biosynthetic process"/>
    <property type="evidence" value="ECO:0007669"/>
    <property type="project" value="UniProtKB-UniRule"/>
</dbReference>
<dbReference type="CDD" id="cd00611">
    <property type="entry name" value="PSAT_like"/>
    <property type="match status" value="1"/>
</dbReference>
<dbReference type="FunFam" id="3.40.640.10:FF:000010">
    <property type="entry name" value="Phosphoserine aminotransferase"/>
    <property type="match status" value="1"/>
</dbReference>
<dbReference type="FunFam" id="3.90.1150.10:FF:000006">
    <property type="entry name" value="Phosphoserine aminotransferase"/>
    <property type="match status" value="1"/>
</dbReference>
<dbReference type="Gene3D" id="3.90.1150.10">
    <property type="entry name" value="Aspartate Aminotransferase, domain 1"/>
    <property type="match status" value="1"/>
</dbReference>
<dbReference type="Gene3D" id="3.40.640.10">
    <property type="entry name" value="Type I PLP-dependent aspartate aminotransferase-like (Major domain)"/>
    <property type="match status" value="1"/>
</dbReference>
<dbReference type="HAMAP" id="MF_00160">
    <property type="entry name" value="SerC_aminotrans_5"/>
    <property type="match status" value="1"/>
</dbReference>
<dbReference type="InterPro" id="IPR000192">
    <property type="entry name" value="Aminotrans_V_dom"/>
</dbReference>
<dbReference type="InterPro" id="IPR020578">
    <property type="entry name" value="Aminotrans_V_PyrdxlP_BS"/>
</dbReference>
<dbReference type="InterPro" id="IPR022278">
    <property type="entry name" value="Pser_aminoTfrase"/>
</dbReference>
<dbReference type="InterPro" id="IPR015424">
    <property type="entry name" value="PyrdxlP-dep_Trfase"/>
</dbReference>
<dbReference type="InterPro" id="IPR015421">
    <property type="entry name" value="PyrdxlP-dep_Trfase_major"/>
</dbReference>
<dbReference type="InterPro" id="IPR015422">
    <property type="entry name" value="PyrdxlP-dep_Trfase_small"/>
</dbReference>
<dbReference type="NCBIfam" id="NF003764">
    <property type="entry name" value="PRK05355.1"/>
    <property type="match status" value="1"/>
</dbReference>
<dbReference type="NCBIfam" id="TIGR01364">
    <property type="entry name" value="serC_1"/>
    <property type="match status" value="1"/>
</dbReference>
<dbReference type="PANTHER" id="PTHR43247">
    <property type="entry name" value="PHOSPHOSERINE AMINOTRANSFERASE"/>
    <property type="match status" value="1"/>
</dbReference>
<dbReference type="PANTHER" id="PTHR43247:SF1">
    <property type="entry name" value="PHOSPHOSERINE AMINOTRANSFERASE"/>
    <property type="match status" value="1"/>
</dbReference>
<dbReference type="Pfam" id="PF00266">
    <property type="entry name" value="Aminotran_5"/>
    <property type="match status" value="1"/>
</dbReference>
<dbReference type="PIRSF" id="PIRSF000525">
    <property type="entry name" value="SerC"/>
    <property type="match status" value="1"/>
</dbReference>
<dbReference type="SUPFAM" id="SSF53383">
    <property type="entry name" value="PLP-dependent transferases"/>
    <property type="match status" value="1"/>
</dbReference>
<dbReference type="PROSITE" id="PS00595">
    <property type="entry name" value="AA_TRANSFER_CLASS_5"/>
    <property type="match status" value="1"/>
</dbReference>
<accession>Q7N6D6</accession>
<keyword id="KW-0028">Amino-acid biosynthesis</keyword>
<keyword id="KW-0032">Aminotransferase</keyword>
<keyword id="KW-0963">Cytoplasm</keyword>
<keyword id="KW-0663">Pyridoxal phosphate</keyword>
<keyword id="KW-0664">Pyridoxine biosynthesis</keyword>
<keyword id="KW-1185">Reference proteome</keyword>
<keyword id="KW-0718">Serine biosynthesis</keyword>
<keyword id="KW-0808">Transferase</keyword>
<organism>
    <name type="scientific">Photorhabdus laumondii subsp. laumondii (strain DSM 15139 / CIP 105565 / TT01)</name>
    <name type="common">Photorhabdus luminescens subsp. laumondii</name>
    <dbReference type="NCBI Taxonomy" id="243265"/>
    <lineage>
        <taxon>Bacteria</taxon>
        <taxon>Pseudomonadati</taxon>
        <taxon>Pseudomonadota</taxon>
        <taxon>Gammaproteobacteria</taxon>
        <taxon>Enterobacterales</taxon>
        <taxon>Morganellaceae</taxon>
        <taxon>Photorhabdus</taxon>
    </lineage>
</organism>
<comment type="function">
    <text evidence="1">Catalyzes the reversible conversion of 3-phosphohydroxypyruvate to phosphoserine and of 3-hydroxy-2-oxo-4-phosphonooxybutanoate to phosphohydroxythreonine.</text>
</comment>
<comment type="catalytic activity">
    <reaction evidence="1">
        <text>O-phospho-L-serine + 2-oxoglutarate = 3-phosphooxypyruvate + L-glutamate</text>
        <dbReference type="Rhea" id="RHEA:14329"/>
        <dbReference type="ChEBI" id="CHEBI:16810"/>
        <dbReference type="ChEBI" id="CHEBI:18110"/>
        <dbReference type="ChEBI" id="CHEBI:29985"/>
        <dbReference type="ChEBI" id="CHEBI:57524"/>
        <dbReference type="EC" id="2.6.1.52"/>
    </reaction>
</comment>
<comment type="catalytic activity">
    <reaction evidence="1">
        <text>4-(phosphooxy)-L-threonine + 2-oxoglutarate = (R)-3-hydroxy-2-oxo-4-phosphooxybutanoate + L-glutamate</text>
        <dbReference type="Rhea" id="RHEA:16573"/>
        <dbReference type="ChEBI" id="CHEBI:16810"/>
        <dbReference type="ChEBI" id="CHEBI:29985"/>
        <dbReference type="ChEBI" id="CHEBI:58452"/>
        <dbReference type="ChEBI" id="CHEBI:58538"/>
        <dbReference type="EC" id="2.6.1.52"/>
    </reaction>
</comment>
<comment type="cofactor">
    <cofactor evidence="1">
        <name>pyridoxal 5'-phosphate</name>
        <dbReference type="ChEBI" id="CHEBI:597326"/>
    </cofactor>
    <text evidence="1">Binds 1 pyridoxal phosphate per subunit.</text>
</comment>
<comment type="pathway">
    <text evidence="1">Amino-acid biosynthesis; L-serine biosynthesis; L-serine from 3-phospho-D-glycerate: step 2/3.</text>
</comment>
<comment type="pathway">
    <text evidence="1">Cofactor biosynthesis; pyridoxine 5'-phosphate biosynthesis; pyridoxine 5'-phosphate from D-erythrose 4-phosphate: step 3/5.</text>
</comment>
<comment type="subunit">
    <text evidence="1">Homodimer.</text>
</comment>
<comment type="subcellular location">
    <subcellularLocation>
        <location evidence="1">Cytoplasm</location>
    </subcellularLocation>
</comment>
<comment type="similarity">
    <text evidence="1">Belongs to the class-V pyridoxal-phosphate-dependent aminotransferase family. SerC subfamily.</text>
</comment>
<protein>
    <recommendedName>
        <fullName evidence="1">Phosphoserine aminotransferase</fullName>
        <ecNumber evidence="1">2.6.1.52</ecNumber>
    </recommendedName>
    <alternativeName>
        <fullName evidence="1">Phosphohydroxythreonine aminotransferase</fullName>
        <shortName evidence="1">PSAT</shortName>
    </alternativeName>
</protein>
<name>SERC_PHOLL</name>
<reference key="1">
    <citation type="journal article" date="2003" name="Nat. Biotechnol.">
        <title>The genome sequence of the entomopathogenic bacterium Photorhabdus luminescens.</title>
        <authorList>
            <person name="Duchaud E."/>
            <person name="Rusniok C."/>
            <person name="Frangeul L."/>
            <person name="Buchrieser C."/>
            <person name="Givaudan A."/>
            <person name="Taourit S."/>
            <person name="Bocs S."/>
            <person name="Boursaux-Eude C."/>
            <person name="Chandler M."/>
            <person name="Charles J.-F."/>
            <person name="Dassa E."/>
            <person name="Derose R."/>
            <person name="Derzelle S."/>
            <person name="Freyssinet G."/>
            <person name="Gaudriault S."/>
            <person name="Medigue C."/>
            <person name="Lanois A."/>
            <person name="Powell K."/>
            <person name="Siguier P."/>
            <person name="Vincent R."/>
            <person name="Wingate V."/>
            <person name="Zouine M."/>
            <person name="Glaser P."/>
            <person name="Boemare N."/>
            <person name="Danchin A."/>
            <person name="Kunst F."/>
        </authorList>
    </citation>
    <scope>NUCLEOTIDE SEQUENCE [LARGE SCALE GENOMIC DNA]</scope>
    <source>
        <strain>DSM 15139 / CIP 105565 / TT01</strain>
    </source>
</reference>
<proteinExistence type="inferred from homology"/>
<sequence length="362" mass="40202">MNQVYNFSSGPAMLPVEVLRRAEQELCNWHGIGTSIMEISHRGKEFIAVAKEAENDLRDLLSVPENYKVLFCHGGARGQFAAIPMNLLGDKVKADYIDGGYWAACAVKEAKKYCTPNVINIKTEINGLKSVKPMREWSLSDDAAYVHYCPNETIDGIAIHEQPDFSDNKIIIADYSSSILSGPLDVSRYGMIYAGAQKNIGPAGITLVIVREDLLGKARKETPSIFDYAVLAENDSMFNTPPTFAWYLSGLVFKWLKEQGGVQEMAKRNRAKAELLYDVIDKSDFYRNQVAPENRSLMNVPFQMVDASLDSKFLAEADAQGLQALKGHRVSGGMRASIYNAMSIEGVQALVDFMADFERRNG</sequence>
<gene>
    <name evidence="1" type="primary">serC</name>
    <name type="ordered locus">plu1619</name>
</gene>